<evidence type="ECO:0000255" key="1">
    <source>
        <dbReference type="HAMAP-Rule" id="MF_01346"/>
    </source>
</evidence>
<gene>
    <name evidence="1" type="primary">atpA</name>
    <name type="ordered locus">STH89</name>
</gene>
<comment type="function">
    <text evidence="1">Produces ATP from ADP in the presence of a proton gradient across the membrane. The alpha chain is a regulatory subunit.</text>
</comment>
<comment type="catalytic activity">
    <reaction evidence="1">
        <text>ATP + H2O + 4 H(+)(in) = ADP + phosphate + 5 H(+)(out)</text>
        <dbReference type="Rhea" id="RHEA:57720"/>
        <dbReference type="ChEBI" id="CHEBI:15377"/>
        <dbReference type="ChEBI" id="CHEBI:15378"/>
        <dbReference type="ChEBI" id="CHEBI:30616"/>
        <dbReference type="ChEBI" id="CHEBI:43474"/>
        <dbReference type="ChEBI" id="CHEBI:456216"/>
        <dbReference type="EC" id="7.1.2.2"/>
    </reaction>
</comment>
<comment type="subunit">
    <text evidence="1">F-type ATPases have 2 components, CF(1) - the catalytic core - and CF(0) - the membrane proton channel. CF(1) has five subunits: alpha(3), beta(3), gamma(1), delta(1), epsilon(1). CF(0) has three main subunits: a(1), b(2) and c(9-12). The alpha and beta chains form an alternating ring which encloses part of the gamma chain. CF(1) is attached to CF(0) by a central stalk formed by the gamma and epsilon chains, while a peripheral stalk is formed by the delta and b chains.</text>
</comment>
<comment type="subcellular location">
    <subcellularLocation>
        <location evidence="1">Cell membrane</location>
        <topology evidence="1">Peripheral membrane protein</topology>
    </subcellularLocation>
</comment>
<comment type="similarity">
    <text evidence="1">Belongs to the ATPase alpha/beta chains family.</text>
</comment>
<keyword id="KW-0066">ATP synthesis</keyword>
<keyword id="KW-0067">ATP-binding</keyword>
<keyword id="KW-1003">Cell membrane</keyword>
<keyword id="KW-0139">CF(1)</keyword>
<keyword id="KW-0375">Hydrogen ion transport</keyword>
<keyword id="KW-0406">Ion transport</keyword>
<keyword id="KW-0472">Membrane</keyword>
<keyword id="KW-0547">Nucleotide-binding</keyword>
<keyword id="KW-1185">Reference proteome</keyword>
<keyword id="KW-1278">Translocase</keyword>
<keyword id="KW-0813">Transport</keyword>
<protein>
    <recommendedName>
        <fullName evidence="1">ATP synthase subunit alpha</fullName>
        <ecNumber evidence="1">7.1.2.2</ecNumber>
    </recommendedName>
    <alternativeName>
        <fullName evidence="1">ATP synthase F1 sector subunit alpha</fullName>
    </alternativeName>
    <alternativeName>
        <fullName evidence="1">F-ATPase subunit alpha</fullName>
    </alternativeName>
</protein>
<sequence length="506" mass="55164">MSIRPEEISSILKQEIERFSTEIETSNVGRVIQVGDGIARVYGLQSCMASELLEFPNGIMGMAFNLEEDNIGVVILGPDEDIKEGMEVRRTGRVVEVPVGPALIGRVVNALGEPLDGKGPIETDMYLPVERKAPGVITRKSVHEPLQTGLKAIDSMTPIGRGQRELIIGDRGTGKTAIAVDTIINQKGQNCICIYVGIGQKASTIAGVVKKLQETGAMEYTIVVSATASDPAPLQFLAPYAGCAMGEYFRDNGMHALIVYDDLSKHAVAYREMSLLMRRPPGREAYPGDVFYLHSRLLERAAKMSDEYGAGSLTALPIIETQAGDVSAYIPTNVISITDGQIFLETDLFNAGVRPAINVGISVSRVGGAAQIDSMKRVSGTLKLDLAQYRELAAFAQFGSDLDKATQARIIRGQRTTEILKQPQYHPLPVELQVLSIFAATNGYLDDLELEEVAAFEQELHTYFKANHPELLARIPKEKWKDIEPEVRAAVDAFKKGYGQRAAANQ</sequence>
<reference key="1">
    <citation type="journal article" date="2004" name="Nucleic Acids Res.">
        <title>Genome sequence of Symbiobacterium thermophilum, an uncultivable bacterium that depends on microbial commensalism.</title>
        <authorList>
            <person name="Ueda K."/>
            <person name="Yamashita A."/>
            <person name="Ishikawa J."/>
            <person name="Shimada M."/>
            <person name="Watsuji T."/>
            <person name="Morimura K."/>
            <person name="Ikeda H."/>
            <person name="Hattori M."/>
            <person name="Beppu T."/>
        </authorList>
    </citation>
    <scope>NUCLEOTIDE SEQUENCE [LARGE SCALE GENOMIC DNA]</scope>
    <source>
        <strain>DSM 24528 / JCM 14929 / IAM 14863 / T</strain>
    </source>
</reference>
<name>ATPA_SYMTH</name>
<proteinExistence type="inferred from homology"/>
<feature type="chain" id="PRO_0000238375" description="ATP synthase subunit alpha">
    <location>
        <begin position="1"/>
        <end position="506"/>
    </location>
</feature>
<feature type="binding site" evidence="1">
    <location>
        <begin position="169"/>
        <end position="176"/>
    </location>
    <ligand>
        <name>ATP</name>
        <dbReference type="ChEBI" id="CHEBI:30616"/>
    </ligand>
</feature>
<feature type="site" description="Required for activity" evidence="1">
    <location>
        <position position="362"/>
    </location>
</feature>
<dbReference type="EC" id="7.1.2.2" evidence="1"/>
<dbReference type="EMBL" id="AP006840">
    <property type="protein sequence ID" value="BAD39074.1"/>
    <property type="molecule type" value="Genomic_DNA"/>
</dbReference>
<dbReference type="RefSeq" id="WP_011194224.1">
    <property type="nucleotide sequence ID" value="NC_006177.1"/>
</dbReference>
<dbReference type="SMR" id="Q67TB9"/>
<dbReference type="STRING" id="292459.STH89"/>
<dbReference type="KEGG" id="sth:STH89"/>
<dbReference type="eggNOG" id="COG0056">
    <property type="taxonomic scope" value="Bacteria"/>
</dbReference>
<dbReference type="HOGENOM" id="CLU_010091_2_1_9"/>
<dbReference type="OrthoDB" id="9803053at2"/>
<dbReference type="Proteomes" id="UP000000417">
    <property type="component" value="Chromosome"/>
</dbReference>
<dbReference type="GO" id="GO:0005886">
    <property type="term" value="C:plasma membrane"/>
    <property type="evidence" value="ECO:0007669"/>
    <property type="project" value="UniProtKB-SubCell"/>
</dbReference>
<dbReference type="GO" id="GO:0045259">
    <property type="term" value="C:proton-transporting ATP synthase complex"/>
    <property type="evidence" value="ECO:0007669"/>
    <property type="project" value="UniProtKB-KW"/>
</dbReference>
<dbReference type="GO" id="GO:0043531">
    <property type="term" value="F:ADP binding"/>
    <property type="evidence" value="ECO:0007669"/>
    <property type="project" value="TreeGrafter"/>
</dbReference>
<dbReference type="GO" id="GO:0005524">
    <property type="term" value="F:ATP binding"/>
    <property type="evidence" value="ECO:0007669"/>
    <property type="project" value="UniProtKB-UniRule"/>
</dbReference>
<dbReference type="GO" id="GO:0046933">
    <property type="term" value="F:proton-transporting ATP synthase activity, rotational mechanism"/>
    <property type="evidence" value="ECO:0007669"/>
    <property type="project" value="UniProtKB-UniRule"/>
</dbReference>
<dbReference type="CDD" id="cd18113">
    <property type="entry name" value="ATP-synt_F1_alpha_C"/>
    <property type="match status" value="1"/>
</dbReference>
<dbReference type="CDD" id="cd18116">
    <property type="entry name" value="ATP-synt_F1_alpha_N"/>
    <property type="match status" value="1"/>
</dbReference>
<dbReference type="CDD" id="cd01132">
    <property type="entry name" value="F1-ATPase_alpha_CD"/>
    <property type="match status" value="1"/>
</dbReference>
<dbReference type="FunFam" id="1.20.150.20:FF:000001">
    <property type="entry name" value="ATP synthase subunit alpha"/>
    <property type="match status" value="1"/>
</dbReference>
<dbReference type="FunFam" id="2.40.30.20:FF:000001">
    <property type="entry name" value="ATP synthase subunit alpha"/>
    <property type="match status" value="1"/>
</dbReference>
<dbReference type="FunFam" id="3.40.50.300:FF:000002">
    <property type="entry name" value="ATP synthase subunit alpha"/>
    <property type="match status" value="1"/>
</dbReference>
<dbReference type="Gene3D" id="2.40.30.20">
    <property type="match status" value="1"/>
</dbReference>
<dbReference type="Gene3D" id="1.20.150.20">
    <property type="entry name" value="ATP synthase alpha/beta chain, C-terminal domain"/>
    <property type="match status" value="1"/>
</dbReference>
<dbReference type="Gene3D" id="3.40.50.300">
    <property type="entry name" value="P-loop containing nucleotide triphosphate hydrolases"/>
    <property type="match status" value="1"/>
</dbReference>
<dbReference type="HAMAP" id="MF_01346">
    <property type="entry name" value="ATP_synth_alpha_bact"/>
    <property type="match status" value="1"/>
</dbReference>
<dbReference type="InterPro" id="IPR023366">
    <property type="entry name" value="ATP_synth_asu-like_sf"/>
</dbReference>
<dbReference type="InterPro" id="IPR000793">
    <property type="entry name" value="ATP_synth_asu_C"/>
</dbReference>
<dbReference type="InterPro" id="IPR038376">
    <property type="entry name" value="ATP_synth_asu_C_sf"/>
</dbReference>
<dbReference type="InterPro" id="IPR033732">
    <property type="entry name" value="ATP_synth_F1_a_nt-bd_dom"/>
</dbReference>
<dbReference type="InterPro" id="IPR005294">
    <property type="entry name" value="ATP_synth_F1_asu"/>
</dbReference>
<dbReference type="InterPro" id="IPR020003">
    <property type="entry name" value="ATPase_a/bsu_AS"/>
</dbReference>
<dbReference type="InterPro" id="IPR004100">
    <property type="entry name" value="ATPase_F1/V1/A1_a/bsu_N"/>
</dbReference>
<dbReference type="InterPro" id="IPR036121">
    <property type="entry name" value="ATPase_F1/V1/A1_a/bsu_N_sf"/>
</dbReference>
<dbReference type="InterPro" id="IPR000194">
    <property type="entry name" value="ATPase_F1/V1/A1_a/bsu_nucl-bd"/>
</dbReference>
<dbReference type="InterPro" id="IPR027417">
    <property type="entry name" value="P-loop_NTPase"/>
</dbReference>
<dbReference type="NCBIfam" id="TIGR00962">
    <property type="entry name" value="atpA"/>
    <property type="match status" value="1"/>
</dbReference>
<dbReference type="NCBIfam" id="NF009884">
    <property type="entry name" value="PRK13343.1"/>
    <property type="match status" value="1"/>
</dbReference>
<dbReference type="PANTHER" id="PTHR48082">
    <property type="entry name" value="ATP SYNTHASE SUBUNIT ALPHA, MITOCHONDRIAL"/>
    <property type="match status" value="1"/>
</dbReference>
<dbReference type="PANTHER" id="PTHR48082:SF2">
    <property type="entry name" value="ATP SYNTHASE SUBUNIT ALPHA, MITOCHONDRIAL"/>
    <property type="match status" value="1"/>
</dbReference>
<dbReference type="Pfam" id="PF00006">
    <property type="entry name" value="ATP-synt_ab"/>
    <property type="match status" value="1"/>
</dbReference>
<dbReference type="Pfam" id="PF00306">
    <property type="entry name" value="ATP-synt_ab_C"/>
    <property type="match status" value="1"/>
</dbReference>
<dbReference type="Pfam" id="PF02874">
    <property type="entry name" value="ATP-synt_ab_N"/>
    <property type="match status" value="1"/>
</dbReference>
<dbReference type="PIRSF" id="PIRSF039088">
    <property type="entry name" value="F_ATPase_subunit_alpha"/>
    <property type="match status" value="1"/>
</dbReference>
<dbReference type="SUPFAM" id="SSF47917">
    <property type="entry name" value="C-terminal domain of alpha and beta subunits of F1 ATP synthase"/>
    <property type="match status" value="1"/>
</dbReference>
<dbReference type="SUPFAM" id="SSF50615">
    <property type="entry name" value="N-terminal domain of alpha and beta subunits of F1 ATP synthase"/>
    <property type="match status" value="1"/>
</dbReference>
<dbReference type="SUPFAM" id="SSF52540">
    <property type="entry name" value="P-loop containing nucleoside triphosphate hydrolases"/>
    <property type="match status" value="1"/>
</dbReference>
<dbReference type="PROSITE" id="PS00152">
    <property type="entry name" value="ATPASE_ALPHA_BETA"/>
    <property type="match status" value="1"/>
</dbReference>
<accession>Q67TB9</accession>
<organism>
    <name type="scientific">Symbiobacterium thermophilum (strain DSM 24528 / JCM 14929 / IAM 14863 / T)</name>
    <dbReference type="NCBI Taxonomy" id="292459"/>
    <lineage>
        <taxon>Bacteria</taxon>
        <taxon>Bacillati</taxon>
        <taxon>Bacillota</taxon>
        <taxon>Clostridia</taxon>
        <taxon>Eubacteriales</taxon>
        <taxon>Symbiobacteriaceae</taxon>
        <taxon>Symbiobacterium</taxon>
    </lineage>
</organism>